<comment type="function">
    <text evidence="1">Reversibly transfers an adenylyl group from ATP to 4'-phosphopantetheine, yielding dephospho-CoA (dPCoA) and pyrophosphate.</text>
</comment>
<comment type="catalytic activity">
    <reaction evidence="1">
        <text>(R)-4'-phosphopantetheine + ATP + H(+) = 3'-dephospho-CoA + diphosphate</text>
        <dbReference type="Rhea" id="RHEA:19801"/>
        <dbReference type="ChEBI" id="CHEBI:15378"/>
        <dbReference type="ChEBI" id="CHEBI:30616"/>
        <dbReference type="ChEBI" id="CHEBI:33019"/>
        <dbReference type="ChEBI" id="CHEBI:57328"/>
        <dbReference type="ChEBI" id="CHEBI:61723"/>
        <dbReference type="EC" id="2.7.7.3"/>
    </reaction>
</comment>
<comment type="cofactor">
    <cofactor evidence="1">
        <name>Mg(2+)</name>
        <dbReference type="ChEBI" id="CHEBI:18420"/>
    </cofactor>
</comment>
<comment type="pathway">
    <text evidence="1">Cofactor biosynthesis; coenzyme A biosynthesis; CoA from (R)-pantothenate: step 4/5.</text>
</comment>
<comment type="subunit">
    <text evidence="1">Homohexamer.</text>
</comment>
<comment type="subcellular location">
    <subcellularLocation>
        <location evidence="1">Cytoplasm</location>
    </subcellularLocation>
</comment>
<comment type="similarity">
    <text evidence="1">Belongs to the bacterial CoaD family.</text>
</comment>
<organism>
    <name type="scientific">Mycobacterium ulcerans (strain Agy99)</name>
    <dbReference type="NCBI Taxonomy" id="362242"/>
    <lineage>
        <taxon>Bacteria</taxon>
        <taxon>Bacillati</taxon>
        <taxon>Actinomycetota</taxon>
        <taxon>Actinomycetes</taxon>
        <taxon>Mycobacteriales</taxon>
        <taxon>Mycobacteriaceae</taxon>
        <taxon>Mycobacterium</taxon>
        <taxon>Mycobacterium ulcerans group</taxon>
    </lineage>
</organism>
<dbReference type="EC" id="2.7.7.3" evidence="1"/>
<dbReference type="EMBL" id="CP000325">
    <property type="protein sequence ID" value="ABL04436.1"/>
    <property type="molecule type" value="Genomic_DNA"/>
</dbReference>
<dbReference type="RefSeq" id="WP_011740055.1">
    <property type="nucleotide sequence ID" value="NC_008611.1"/>
</dbReference>
<dbReference type="SMR" id="A0PQ17"/>
<dbReference type="GeneID" id="93436328"/>
<dbReference type="KEGG" id="mul:MUL_1994"/>
<dbReference type="eggNOG" id="COG0669">
    <property type="taxonomic scope" value="Bacteria"/>
</dbReference>
<dbReference type="HOGENOM" id="CLU_100149_1_0_11"/>
<dbReference type="UniPathway" id="UPA00241">
    <property type="reaction ID" value="UER00355"/>
</dbReference>
<dbReference type="Proteomes" id="UP000000765">
    <property type="component" value="Chromosome"/>
</dbReference>
<dbReference type="GO" id="GO:0005737">
    <property type="term" value="C:cytoplasm"/>
    <property type="evidence" value="ECO:0007669"/>
    <property type="project" value="UniProtKB-SubCell"/>
</dbReference>
<dbReference type="GO" id="GO:0005524">
    <property type="term" value="F:ATP binding"/>
    <property type="evidence" value="ECO:0007669"/>
    <property type="project" value="UniProtKB-KW"/>
</dbReference>
<dbReference type="GO" id="GO:0004595">
    <property type="term" value="F:pantetheine-phosphate adenylyltransferase activity"/>
    <property type="evidence" value="ECO:0007669"/>
    <property type="project" value="UniProtKB-UniRule"/>
</dbReference>
<dbReference type="GO" id="GO:0015937">
    <property type="term" value="P:coenzyme A biosynthetic process"/>
    <property type="evidence" value="ECO:0007669"/>
    <property type="project" value="UniProtKB-UniRule"/>
</dbReference>
<dbReference type="CDD" id="cd02163">
    <property type="entry name" value="PPAT"/>
    <property type="match status" value="1"/>
</dbReference>
<dbReference type="FunFam" id="3.40.50.620:FF:000012">
    <property type="entry name" value="Phosphopantetheine adenylyltransferase"/>
    <property type="match status" value="1"/>
</dbReference>
<dbReference type="Gene3D" id="3.40.50.620">
    <property type="entry name" value="HUPs"/>
    <property type="match status" value="1"/>
</dbReference>
<dbReference type="HAMAP" id="MF_00151">
    <property type="entry name" value="PPAT_bact"/>
    <property type="match status" value="1"/>
</dbReference>
<dbReference type="InterPro" id="IPR004821">
    <property type="entry name" value="Cyt_trans-like"/>
</dbReference>
<dbReference type="InterPro" id="IPR001980">
    <property type="entry name" value="PPAT"/>
</dbReference>
<dbReference type="InterPro" id="IPR014729">
    <property type="entry name" value="Rossmann-like_a/b/a_fold"/>
</dbReference>
<dbReference type="NCBIfam" id="TIGR01510">
    <property type="entry name" value="coaD_prev_kdtB"/>
    <property type="match status" value="1"/>
</dbReference>
<dbReference type="NCBIfam" id="TIGR00125">
    <property type="entry name" value="cyt_tran_rel"/>
    <property type="match status" value="1"/>
</dbReference>
<dbReference type="PANTHER" id="PTHR21342">
    <property type="entry name" value="PHOSPHOPANTETHEINE ADENYLYLTRANSFERASE"/>
    <property type="match status" value="1"/>
</dbReference>
<dbReference type="PANTHER" id="PTHR21342:SF1">
    <property type="entry name" value="PHOSPHOPANTETHEINE ADENYLYLTRANSFERASE"/>
    <property type="match status" value="1"/>
</dbReference>
<dbReference type="Pfam" id="PF01467">
    <property type="entry name" value="CTP_transf_like"/>
    <property type="match status" value="1"/>
</dbReference>
<dbReference type="PRINTS" id="PR01020">
    <property type="entry name" value="LPSBIOSNTHSS"/>
</dbReference>
<dbReference type="SUPFAM" id="SSF52374">
    <property type="entry name" value="Nucleotidylyl transferase"/>
    <property type="match status" value="1"/>
</dbReference>
<name>COAD_MYCUA</name>
<proteinExistence type="inferred from homology"/>
<protein>
    <recommendedName>
        <fullName evidence="1">Phosphopantetheine adenylyltransferase</fullName>
        <ecNumber evidence="1">2.7.7.3</ecNumber>
    </recommendedName>
    <alternativeName>
        <fullName evidence="1">Dephospho-CoA pyrophosphorylase</fullName>
    </alternativeName>
    <alternativeName>
        <fullName evidence="1">Pantetheine-phosphate adenylyltransferase</fullName>
        <shortName evidence="1">PPAT</shortName>
    </alternativeName>
</protein>
<feature type="chain" id="PRO_1000011183" description="Phosphopantetheine adenylyltransferase">
    <location>
        <begin position="1"/>
        <end position="157"/>
    </location>
</feature>
<feature type="binding site" evidence="1">
    <location>
        <begin position="9"/>
        <end position="10"/>
    </location>
    <ligand>
        <name>ATP</name>
        <dbReference type="ChEBI" id="CHEBI:30616"/>
    </ligand>
</feature>
<feature type="binding site" evidence="1">
    <location>
        <position position="9"/>
    </location>
    <ligand>
        <name>substrate</name>
    </ligand>
</feature>
<feature type="binding site" evidence="1">
    <location>
        <position position="17"/>
    </location>
    <ligand>
        <name>ATP</name>
        <dbReference type="ChEBI" id="CHEBI:30616"/>
    </ligand>
</feature>
<feature type="binding site" evidence="1">
    <location>
        <position position="41"/>
    </location>
    <ligand>
        <name>substrate</name>
    </ligand>
</feature>
<feature type="binding site" evidence="1">
    <location>
        <position position="73"/>
    </location>
    <ligand>
        <name>substrate</name>
    </ligand>
</feature>
<feature type="binding site" evidence="1">
    <location>
        <position position="87"/>
    </location>
    <ligand>
        <name>substrate</name>
    </ligand>
</feature>
<feature type="binding site" evidence="1">
    <location>
        <begin position="88"/>
        <end position="90"/>
    </location>
    <ligand>
        <name>ATP</name>
        <dbReference type="ChEBI" id="CHEBI:30616"/>
    </ligand>
</feature>
<feature type="binding site" evidence="1">
    <location>
        <position position="98"/>
    </location>
    <ligand>
        <name>ATP</name>
        <dbReference type="ChEBI" id="CHEBI:30616"/>
    </ligand>
</feature>
<feature type="binding site" evidence="1">
    <location>
        <begin position="122"/>
        <end position="128"/>
    </location>
    <ligand>
        <name>ATP</name>
        <dbReference type="ChEBI" id="CHEBI:30616"/>
    </ligand>
</feature>
<feature type="site" description="Transition state stabilizer" evidence="1">
    <location>
        <position position="17"/>
    </location>
</feature>
<gene>
    <name evidence="1" type="primary">coaD</name>
    <name type="ordered locus">MUL_1994</name>
</gene>
<evidence type="ECO:0000255" key="1">
    <source>
        <dbReference type="HAMAP-Rule" id="MF_00151"/>
    </source>
</evidence>
<sequence>MTGAVCPGSFDPVTLGHVDVFERAAAQFDEVVVAILVNPAKKGMFDLDERIAMIEESTAHLPNLRVEAGQGLVVDFVKAQGMNAIVKGLRTGTDFEYELQMAQMNKHIAGVDTFFVATAPRYSFVSSSLAKEVAMLGGDVSELLPEPVNRRLRERTK</sequence>
<accession>A0PQ17</accession>
<reference key="1">
    <citation type="journal article" date="2007" name="Genome Res.">
        <title>Reductive evolution and niche adaptation inferred from the genome of Mycobacterium ulcerans, the causative agent of Buruli ulcer.</title>
        <authorList>
            <person name="Stinear T.P."/>
            <person name="Seemann T."/>
            <person name="Pidot S."/>
            <person name="Frigui W."/>
            <person name="Reysset G."/>
            <person name="Garnier T."/>
            <person name="Meurice G."/>
            <person name="Simon D."/>
            <person name="Bouchier C."/>
            <person name="Ma L."/>
            <person name="Tichit M."/>
            <person name="Porter J.L."/>
            <person name="Ryan J."/>
            <person name="Johnson P.D.R."/>
            <person name="Davies J.K."/>
            <person name="Jenkin G.A."/>
            <person name="Small P.L.C."/>
            <person name="Jones L.M."/>
            <person name="Tekaia F."/>
            <person name="Laval F."/>
            <person name="Daffe M."/>
            <person name="Parkhill J."/>
            <person name="Cole S.T."/>
        </authorList>
    </citation>
    <scope>NUCLEOTIDE SEQUENCE [LARGE SCALE GENOMIC DNA]</scope>
    <source>
        <strain>Agy99</strain>
    </source>
</reference>
<keyword id="KW-0067">ATP-binding</keyword>
<keyword id="KW-0173">Coenzyme A biosynthesis</keyword>
<keyword id="KW-0963">Cytoplasm</keyword>
<keyword id="KW-0460">Magnesium</keyword>
<keyword id="KW-0547">Nucleotide-binding</keyword>
<keyword id="KW-0548">Nucleotidyltransferase</keyword>
<keyword id="KW-0808">Transferase</keyword>